<protein>
    <recommendedName>
        <fullName>Stationary phase-expressed protein 1</fullName>
    </recommendedName>
</protein>
<feature type="chain" id="PRO_0000377677" description="Stationary phase-expressed protein 1">
    <location>
        <begin position="1"/>
        <end position="95"/>
    </location>
</feature>
<feature type="transmembrane region" description="Helical" evidence="2">
    <location>
        <begin position="20"/>
        <end position="38"/>
    </location>
</feature>
<sequence length="95" mass="10545">MKLDSGIYSEAQRVVRTPKFRYIMLGLVGAAVVPTAYMRRGYTVPAHSLDNINGVDTTKASVMGTEQRAAMTKGKSLQEMMDDDEVTYLMFSSIM</sequence>
<organism>
    <name type="scientific">Saccharomyces cerevisiae (strain RM11-1a)</name>
    <name type="common">Baker's yeast</name>
    <dbReference type="NCBI Taxonomy" id="285006"/>
    <lineage>
        <taxon>Eukaryota</taxon>
        <taxon>Fungi</taxon>
        <taxon>Dikarya</taxon>
        <taxon>Ascomycota</taxon>
        <taxon>Saccharomycotina</taxon>
        <taxon>Saccharomycetes</taxon>
        <taxon>Saccharomycetales</taxon>
        <taxon>Saccharomycetaceae</taxon>
        <taxon>Saccharomyces</taxon>
    </lineage>
</organism>
<dbReference type="EMBL" id="CH408044">
    <property type="protein sequence ID" value="EDV10025.1"/>
    <property type="molecule type" value="Genomic_DNA"/>
</dbReference>
<dbReference type="SMR" id="B3LI04"/>
<dbReference type="HOGENOM" id="CLU_183906_0_0_1"/>
<dbReference type="OrthoDB" id="33361at4893"/>
<dbReference type="Proteomes" id="UP000008335">
    <property type="component" value="Unassembled WGS sequence"/>
</dbReference>
<dbReference type="GO" id="GO:0031966">
    <property type="term" value="C:mitochondrial membrane"/>
    <property type="evidence" value="ECO:0007669"/>
    <property type="project" value="UniProtKB-SubCell"/>
</dbReference>
<proteinExistence type="inferred from homology"/>
<keyword id="KW-0472">Membrane</keyword>
<keyword id="KW-0496">Mitochondrion</keyword>
<keyword id="KW-0812">Transmembrane</keyword>
<keyword id="KW-1133">Transmembrane helix</keyword>
<name>SPG1_YEAS1</name>
<accession>B3LI04</accession>
<evidence type="ECO:0000250" key="1"/>
<evidence type="ECO:0000255" key="2"/>
<reference key="1">
    <citation type="submission" date="2005-03" db="EMBL/GenBank/DDBJ databases">
        <title>Annotation of the Saccharomyces cerevisiae RM11-1a genome.</title>
        <authorList>
            <consortium name="The Broad Institute Genome Sequencing Platform"/>
            <person name="Birren B.W."/>
            <person name="Lander E.S."/>
            <person name="Galagan J.E."/>
            <person name="Nusbaum C."/>
            <person name="Devon K."/>
            <person name="Cuomo C."/>
            <person name="Jaffe D.B."/>
            <person name="Butler J."/>
            <person name="Alvarez P."/>
            <person name="Gnerre S."/>
            <person name="Grabherr M."/>
            <person name="Kleber M."/>
            <person name="Mauceli E.W."/>
            <person name="Brockman W."/>
            <person name="MacCallum I.A."/>
            <person name="Rounsley S."/>
            <person name="Young S.K."/>
            <person name="LaButti K."/>
            <person name="Pushparaj V."/>
            <person name="DeCaprio D."/>
            <person name="Crawford M."/>
            <person name="Koehrsen M."/>
            <person name="Engels R."/>
            <person name="Montgomery P."/>
            <person name="Pearson M."/>
            <person name="Howarth C."/>
            <person name="Larson L."/>
            <person name="Luoma S."/>
            <person name="White J."/>
            <person name="O'Leary S."/>
            <person name="Kodira C.D."/>
            <person name="Zeng Q."/>
            <person name="Yandava C."/>
            <person name="Alvarado L."/>
            <person name="Pratt S."/>
            <person name="Kruglyak L."/>
        </authorList>
    </citation>
    <scope>NUCLEOTIDE SEQUENCE [LARGE SCALE GENOMIC DNA]</scope>
    <source>
        <strain>RM11-1a</strain>
    </source>
</reference>
<comment type="subcellular location">
    <subcellularLocation>
        <location evidence="1">Mitochondrion membrane</location>
        <topology evidence="1">Single-pass membrane protein</topology>
    </subcellularLocation>
</comment>
<gene>
    <name type="primary">SPG1</name>
    <name type="ORF">SCRG_00788</name>
</gene>